<proteinExistence type="evidence at protein level"/>
<accession>Q9S2H6</accession>
<comment type="function">
    <text evidence="2">The phosphoenolpyruvate-dependent sugar phosphotransferase system (sugar PTS), a major carbohydrate active transport system, catalyzes the phosphorylation of incoming sugar substrates concomitantly with their translocation across the cell membrane. This system is involved in N-acetylglucosamine (GlcNAc) transport.</text>
</comment>
<comment type="catalytic activity">
    <reaction evidence="2">
        <text>N(pros)-phospho-L-histidyl-[protein] + N-acetyl-D-glucosamine(out) = N-acetyl-D-glucosamine 6-phosphate(in) + L-histidyl-[protein]</text>
        <dbReference type="Rhea" id="RHEA:49240"/>
        <dbReference type="Rhea" id="RHEA-COMP:9745"/>
        <dbReference type="Rhea" id="RHEA-COMP:9746"/>
        <dbReference type="ChEBI" id="CHEBI:29979"/>
        <dbReference type="ChEBI" id="CHEBI:57513"/>
        <dbReference type="ChEBI" id="CHEBI:64837"/>
        <dbReference type="ChEBI" id="CHEBI:506227"/>
        <dbReference type="EC" id="2.7.1.193"/>
    </reaction>
</comment>
<comment type="induction">
    <text evidence="2">Induced by GlcNAc.</text>
</comment>
<comment type="domain">
    <text evidence="1">The PTS EIIB type-1 domain is phosphorylated by phospho-EIIA on a cysteinyl residue. Then, it transfers the phosphoryl group to the sugar substrate concomitantly with the sugar uptake processed by the PTS EIIC type-1 domain.</text>
</comment>
<comment type="disruption phenotype">
    <text evidence="2">Mutant is insensitive to GlcNAc.</text>
</comment>
<reference key="1">
    <citation type="journal article" date="2002" name="Nature">
        <title>Complete genome sequence of the model actinomycete Streptomyces coelicolor A3(2).</title>
        <authorList>
            <person name="Bentley S.D."/>
            <person name="Chater K.F."/>
            <person name="Cerdeno-Tarraga A.-M."/>
            <person name="Challis G.L."/>
            <person name="Thomson N.R."/>
            <person name="James K.D."/>
            <person name="Harris D.E."/>
            <person name="Quail M.A."/>
            <person name="Kieser H."/>
            <person name="Harper D."/>
            <person name="Bateman A."/>
            <person name="Brown S."/>
            <person name="Chandra G."/>
            <person name="Chen C.W."/>
            <person name="Collins M."/>
            <person name="Cronin A."/>
            <person name="Fraser A."/>
            <person name="Goble A."/>
            <person name="Hidalgo J."/>
            <person name="Hornsby T."/>
            <person name="Howarth S."/>
            <person name="Huang C.-H."/>
            <person name="Kieser T."/>
            <person name="Larke L."/>
            <person name="Murphy L.D."/>
            <person name="Oliver K."/>
            <person name="O'Neil S."/>
            <person name="Rabbinowitsch E."/>
            <person name="Rajandream M.A."/>
            <person name="Rutherford K.M."/>
            <person name="Rutter S."/>
            <person name="Seeger K."/>
            <person name="Saunders D."/>
            <person name="Sharp S."/>
            <person name="Squares R."/>
            <person name="Squares S."/>
            <person name="Taylor K."/>
            <person name="Warren T."/>
            <person name="Wietzorrek A."/>
            <person name="Woodward J.R."/>
            <person name="Barrell B.G."/>
            <person name="Parkhill J."/>
            <person name="Hopwood D.A."/>
        </authorList>
    </citation>
    <scope>NUCLEOTIDE SEQUENCE [LARGE SCALE GENOMIC DNA]</scope>
    <source>
        <strain>ATCC BAA-471 / A3(2) / M145</strain>
    </source>
</reference>
<reference key="2">
    <citation type="journal article" date="2010" name="Mol. Microbiol.">
        <title>The permease gene nagE2 is the key to N-acetylglucosamine sensing and utilization in Streptomyces coelicolor and is subject to multi-level control.</title>
        <authorList>
            <person name="Nothaft H."/>
            <person name="Rigali S."/>
            <person name="Boomsma B."/>
            <person name="Swiatek M."/>
            <person name="McDowall K.J."/>
            <person name="van Wezel G.P."/>
            <person name="Titgemeyer F."/>
        </authorList>
    </citation>
    <scope>FUNCTION</scope>
    <scope>CATALYTIC ACTIVITY</scope>
    <scope>PHOSPHORYLATION</scope>
    <scope>INDUCTION</scope>
    <scope>DISRUPTION PHENOTYPE</scope>
    <source>
        <strain>ATCC BAA-471 / A3(2) / M145</strain>
    </source>
</reference>
<name>PTWB_STRCO</name>
<evidence type="ECO:0000255" key="1">
    <source>
        <dbReference type="PROSITE-ProRule" id="PRU00421"/>
    </source>
</evidence>
<evidence type="ECO:0000269" key="2">
    <source>
    </source>
</evidence>
<evidence type="ECO:0000303" key="3">
    <source>
    </source>
</evidence>
<evidence type="ECO:0000305" key="4"/>
<evidence type="ECO:0000305" key="5">
    <source>
    </source>
</evidence>
<evidence type="ECO:0000312" key="6">
    <source>
        <dbReference type="EMBL" id="CAB50986.1"/>
    </source>
</evidence>
<sequence length="77" mass="7904">MASKAEKIVAGLGGIDNIDEIEGCITRLRTEVNDPALVNEAALKAAGAHGVVKMGTAIQVVIGTDADPIAAEIEDMM</sequence>
<feature type="chain" id="PRO_0000447881" description="PTS system N-acetylglucosamine-specific EIIB component">
    <location>
        <begin position="1"/>
        <end position="77"/>
    </location>
</feature>
<feature type="domain" description="PTS EIIB type-1" evidence="1">
    <location>
        <begin position="2"/>
        <end position="77"/>
    </location>
</feature>
<feature type="active site" description="Phosphocysteine intermediate; for EIIB activity" evidence="1">
    <location>
        <position position="24"/>
    </location>
</feature>
<organism>
    <name type="scientific">Streptomyces coelicolor (strain ATCC BAA-471 / A3(2) / M145)</name>
    <dbReference type="NCBI Taxonomy" id="100226"/>
    <lineage>
        <taxon>Bacteria</taxon>
        <taxon>Bacillati</taxon>
        <taxon>Actinomycetota</taxon>
        <taxon>Actinomycetes</taxon>
        <taxon>Kitasatosporales</taxon>
        <taxon>Streptomycetaceae</taxon>
        <taxon>Streptomyces</taxon>
        <taxon>Streptomyces albidoflavus group</taxon>
    </lineage>
</organism>
<gene>
    <name evidence="3" type="primary">nagF</name>
    <name evidence="5" type="synonym">malX2</name>
    <name evidence="6" type="ordered locus">SCO2905</name>
</gene>
<protein>
    <recommendedName>
        <fullName evidence="4">PTS system N-acetylglucosamine-specific EIIB component</fullName>
        <shortName evidence="4">PTS system GlcNAc-specific EIIB component</shortName>
        <ecNumber evidence="2">2.7.1.193</ecNumber>
    </recommendedName>
    <alternativeName>
        <fullName evidence="4">N-acetylglucosamine-specific phosphotransferase enzyme IIB component</fullName>
        <shortName evidence="4">GlcNAc-specific phosphotransferase enzyme IIB component</shortName>
    </alternativeName>
</protein>
<keyword id="KW-0418">Kinase</keyword>
<keyword id="KW-0597">Phosphoprotein</keyword>
<keyword id="KW-0598">Phosphotransferase system</keyword>
<keyword id="KW-1185">Reference proteome</keyword>
<keyword id="KW-0762">Sugar transport</keyword>
<keyword id="KW-0808">Transferase</keyword>
<keyword id="KW-0813">Transport</keyword>
<dbReference type="EC" id="2.7.1.193" evidence="2"/>
<dbReference type="EMBL" id="AL939114">
    <property type="protein sequence ID" value="CAB50986.1"/>
    <property type="molecule type" value="Genomic_DNA"/>
</dbReference>
<dbReference type="PIR" id="T36128">
    <property type="entry name" value="T36128"/>
</dbReference>
<dbReference type="RefSeq" id="NP_627131.1">
    <property type="nucleotide sequence ID" value="NC_003888.3"/>
</dbReference>
<dbReference type="RefSeq" id="WP_003975905.1">
    <property type="nucleotide sequence ID" value="NZ_VNID01000010.1"/>
</dbReference>
<dbReference type="SMR" id="Q9S2H6"/>
<dbReference type="STRING" id="100226.gene:17760516"/>
<dbReference type="TCDB" id="4.A.1.1.20">
    <property type="family name" value="the pts glucose-glucoside (glc) family"/>
</dbReference>
<dbReference type="PaxDb" id="100226-SCO2905"/>
<dbReference type="KEGG" id="sco:SCO2905"/>
<dbReference type="PATRIC" id="fig|100226.15.peg.2964"/>
<dbReference type="eggNOG" id="COG1264">
    <property type="taxonomic scope" value="Bacteria"/>
</dbReference>
<dbReference type="HOGENOM" id="CLU_012312_8_4_11"/>
<dbReference type="InParanoid" id="Q9S2H6"/>
<dbReference type="OrthoDB" id="2045873at2"/>
<dbReference type="Proteomes" id="UP000001973">
    <property type="component" value="Chromosome"/>
</dbReference>
<dbReference type="GO" id="GO:0016301">
    <property type="term" value="F:kinase activity"/>
    <property type="evidence" value="ECO:0007669"/>
    <property type="project" value="UniProtKB-KW"/>
</dbReference>
<dbReference type="GO" id="GO:0103111">
    <property type="term" value="F:protein-N(pi)-phosphohistidine--N-acetyl-D-glucosamine phosphotransferase activity"/>
    <property type="evidence" value="ECO:0007669"/>
    <property type="project" value="UniProtKB-EC"/>
</dbReference>
<dbReference type="GO" id="GO:0008982">
    <property type="term" value="F:protein-N(PI)-phosphohistidine-sugar phosphotransferase activity"/>
    <property type="evidence" value="ECO:0007669"/>
    <property type="project" value="InterPro"/>
</dbReference>
<dbReference type="GO" id="GO:0009401">
    <property type="term" value="P:phosphoenolpyruvate-dependent sugar phosphotransferase system"/>
    <property type="evidence" value="ECO:0007669"/>
    <property type="project" value="UniProtKB-KW"/>
</dbReference>
<dbReference type="CDD" id="cd00212">
    <property type="entry name" value="PTS_IIB_glc"/>
    <property type="match status" value="1"/>
</dbReference>
<dbReference type="Gene3D" id="3.30.1360.60">
    <property type="entry name" value="Glucose permease domain IIB"/>
    <property type="match status" value="1"/>
</dbReference>
<dbReference type="InterPro" id="IPR036878">
    <property type="entry name" value="Glu_permease_IIB"/>
</dbReference>
<dbReference type="InterPro" id="IPR018113">
    <property type="entry name" value="PTrfase_EIIB_Cys"/>
</dbReference>
<dbReference type="InterPro" id="IPR050429">
    <property type="entry name" value="PTS_Glucose_EIICBA"/>
</dbReference>
<dbReference type="InterPro" id="IPR001996">
    <property type="entry name" value="PTS_IIB_1"/>
</dbReference>
<dbReference type="NCBIfam" id="TIGR00826">
    <property type="entry name" value="EIIB_glc"/>
    <property type="match status" value="1"/>
</dbReference>
<dbReference type="PANTHER" id="PTHR30009">
    <property type="entry name" value="CYTOCHROME C-TYPE SYNTHESIS PROTEIN AND PTS TRANSMEMBRANE COMPONENT"/>
    <property type="match status" value="1"/>
</dbReference>
<dbReference type="PANTHER" id="PTHR30009:SF4">
    <property type="entry name" value="PTS SYSTEM N-ACETYLGLUCOSAMINE-SPECIFIC EIICBA COMPONENT"/>
    <property type="match status" value="1"/>
</dbReference>
<dbReference type="Pfam" id="PF00367">
    <property type="entry name" value="PTS_EIIB"/>
    <property type="match status" value="1"/>
</dbReference>
<dbReference type="SUPFAM" id="SSF55604">
    <property type="entry name" value="Glucose permease domain IIB"/>
    <property type="match status" value="1"/>
</dbReference>
<dbReference type="PROSITE" id="PS51098">
    <property type="entry name" value="PTS_EIIB_TYPE_1"/>
    <property type="match status" value="1"/>
</dbReference>